<proteinExistence type="evidence at protein level"/>
<accession>Q9ALJ4</accession>
<comment type="function">
    <text evidence="3">Hydrolyzes the short-chain alpha-galactosaccharides raffinose and stachyose.</text>
</comment>
<comment type="catalytic activity">
    <reaction evidence="2 3 4">
        <text>Hydrolysis of terminal, non-reducing alpha-D-galactose residues in alpha-D-galactosides, including galactose oligosaccharides, galactomannans and galactolipids.</text>
        <dbReference type="EC" id="3.2.1.22"/>
    </reaction>
</comment>
<comment type="activity regulation">
    <text evidence="3 4">Not inhibited by D-galactose or sucrose (Ref.1). Inhibited by pharmaceutical drug 1-deoxygalactonojirimycin (PubMed:23012371).</text>
</comment>
<comment type="biophysicochemical properties">
    <kinetics>
        <KM evidence="3">0.21 mM for p-nitrophenyl-alpha-galactopyranoside (at 25 degrees Celsius and pH 6.5)</KM>
        <KM evidence="3">3.8 mM for raffinose (at 25 degrees Celsius and pH 6.5)</KM>
        <text evidence="3">kcat is 105 sec(-1) for p-nitrophenyl-alpha-galactopyranoside (at 25 degrees Celsius and pH 6.5). kcat is 180 sec(-1) for raffinose (at 25 degrees Celsius and pH 6.5).</text>
    </kinetics>
    <phDependence>
        <text evidence="4">Optimum pH is 6.5.</text>
    </phDependence>
    <temperatureDependence>
        <text evidence="4">Optimum temperature is 65 degrees Celsius.</text>
    </temperatureDependence>
</comment>
<comment type="subunit">
    <text evidence="1">Homotetramer.</text>
</comment>
<comment type="biotechnology">
    <text evidence="4">Has properties that make it suitable for elimination of D-raffinose from low green syrup in sugar manufacturing process from beets in order to improve the yield of sucrose.</text>
</comment>
<comment type="similarity">
    <text evidence="7">Belongs to the glycosyl hydrolase 36 family.</text>
</comment>
<feature type="chain" id="PRO_0000439585" description="Alpha-galactosidase AgaA">
    <location>
        <begin position="1"/>
        <end position="729"/>
    </location>
</feature>
<feature type="active site" description="Nucleophile" evidence="3">
    <location>
        <position position="478"/>
    </location>
</feature>
<feature type="active site" description="Proton donor" evidence="3">
    <location>
        <position position="548"/>
    </location>
</feature>
<feature type="binding site" evidence="3 12">
    <location>
        <position position="53"/>
    </location>
    <ligand>
        <name>substrate</name>
    </ligand>
</feature>
<feature type="binding site" evidence="3 12">
    <location>
        <position position="199"/>
    </location>
    <ligand>
        <name>substrate</name>
    </ligand>
</feature>
<feature type="binding site" evidence="3 12">
    <location>
        <begin position="366"/>
        <end position="367"/>
    </location>
    <ligand>
        <name>substrate</name>
    </ligand>
</feature>
<feature type="binding site" evidence="3 12">
    <location>
        <position position="443"/>
    </location>
    <ligand>
        <name>substrate</name>
    </ligand>
</feature>
<feature type="binding site" evidence="3 12">
    <location>
        <begin position="476"/>
        <end position="480"/>
    </location>
    <ligand>
        <name>substrate</name>
    </ligand>
</feature>
<feature type="binding site" evidence="3 12">
    <location>
        <position position="526"/>
    </location>
    <ligand>
        <name>substrate</name>
    </ligand>
</feature>
<feature type="binding site" evidence="3 12">
    <location>
        <position position="548"/>
    </location>
    <ligand>
        <name>substrate</name>
    </ligand>
</feature>
<feature type="mutagenesis site" description="Very strongly reduced hydrolytic efficiency against raffinose, but displays medium level of transglycosylation activity compared to none with wild-type enzyme." evidence="3">
    <original>W</original>
    <variation>A</variation>
    <location>
        <position position="336"/>
    </location>
</feature>
<feature type="mutagenesis site" description="Strongly reduced hydrolytic efficiency against raffinose, but displays high level of transglycosylation activity compared to none with wild-type enzyme." evidence="3">
    <original>W</original>
    <variation>F</variation>
    <variation>S</variation>
    <location>
        <position position="336"/>
    </location>
</feature>
<feature type="mutagenesis site" description="Very strongly reduced hydrolytic efficiency against raffinose, but displays low level of transglycosylation activity compared to none with wild-type enzyme." evidence="3">
    <original>W</original>
    <variation>N</variation>
    <location>
        <position position="336"/>
    </location>
</feature>
<feature type="mutagenesis site" description="Loss of activity." evidence="3">
    <original>D</original>
    <variation>A</variation>
    <location>
        <position position="478"/>
    </location>
</feature>
<feature type="mutagenesis site" description="Loss of activity." evidence="3">
    <original>D</original>
    <variation>N</variation>
    <location>
        <position position="548"/>
    </location>
</feature>
<feature type="strand" evidence="15">
    <location>
        <begin position="11"/>
        <end position="16"/>
    </location>
</feature>
<feature type="strand" evidence="15">
    <location>
        <begin position="19"/>
        <end position="26"/>
    </location>
</feature>
<feature type="turn" evidence="15">
    <location>
        <begin position="27"/>
        <end position="29"/>
    </location>
</feature>
<feature type="strand" evidence="15">
    <location>
        <begin position="30"/>
        <end position="38"/>
    </location>
</feature>
<feature type="strand" evidence="14">
    <location>
        <begin position="45"/>
        <end position="47"/>
    </location>
</feature>
<feature type="strand" evidence="15">
    <location>
        <begin position="59"/>
        <end position="61"/>
    </location>
</feature>
<feature type="helix" evidence="15">
    <location>
        <begin position="69"/>
        <end position="71"/>
    </location>
</feature>
<feature type="strand" evidence="15">
    <location>
        <begin position="74"/>
        <end position="76"/>
    </location>
</feature>
<feature type="strand" evidence="15">
    <location>
        <begin position="79"/>
        <end position="82"/>
    </location>
</feature>
<feature type="strand" evidence="15">
    <location>
        <begin position="88"/>
        <end position="92"/>
    </location>
</feature>
<feature type="strand" evidence="15">
    <location>
        <begin position="103"/>
        <end position="112"/>
    </location>
</feature>
<feature type="helix" evidence="15">
    <location>
        <begin position="127"/>
        <end position="129"/>
    </location>
</feature>
<feature type="strand" evidence="15">
    <location>
        <begin position="130"/>
        <end position="139"/>
    </location>
</feature>
<feature type="turn" evidence="15">
    <location>
        <begin position="140"/>
        <end position="143"/>
    </location>
</feature>
<feature type="strand" evidence="15">
    <location>
        <begin position="144"/>
        <end position="156"/>
    </location>
</feature>
<feature type="strand" evidence="15">
    <location>
        <begin position="158"/>
        <end position="167"/>
    </location>
</feature>
<feature type="strand" evidence="15">
    <location>
        <begin position="169"/>
        <end position="171"/>
    </location>
</feature>
<feature type="strand" evidence="15">
    <location>
        <begin position="173"/>
        <end position="186"/>
    </location>
</feature>
<feature type="strand" evidence="15">
    <location>
        <begin position="190"/>
        <end position="196"/>
    </location>
</feature>
<feature type="strand" evidence="15">
    <location>
        <begin position="206"/>
        <end position="209"/>
    </location>
</feature>
<feature type="strand" evidence="15">
    <location>
        <begin position="212"/>
        <end position="219"/>
    </location>
</feature>
<feature type="strand" evidence="15">
    <location>
        <begin position="221"/>
        <end position="223"/>
    </location>
</feature>
<feature type="strand" evidence="15">
    <location>
        <begin position="226"/>
        <end position="236"/>
    </location>
</feature>
<feature type="strand" evidence="15">
    <location>
        <begin position="241"/>
        <end position="244"/>
    </location>
</feature>
<feature type="strand" evidence="15">
    <location>
        <begin position="246"/>
        <end position="251"/>
    </location>
</feature>
<feature type="strand" evidence="15">
    <location>
        <begin position="257"/>
        <end position="263"/>
    </location>
</feature>
<feature type="strand" evidence="15">
    <location>
        <begin position="269"/>
        <end position="275"/>
    </location>
</feature>
<feature type="strand" evidence="15">
    <location>
        <begin position="282"/>
        <end position="284"/>
    </location>
</feature>
<feature type="strand" evidence="15">
    <location>
        <begin position="289"/>
        <end position="291"/>
    </location>
</feature>
<feature type="strand" evidence="15">
    <location>
        <begin position="295"/>
        <end position="302"/>
    </location>
</feature>
<feature type="helix" evidence="15">
    <location>
        <begin position="303"/>
        <end position="318"/>
    </location>
</feature>
<feature type="strand" evidence="15">
    <location>
        <begin position="325"/>
        <end position="327"/>
    </location>
</feature>
<feature type="strand" evidence="15">
    <location>
        <begin position="332"/>
        <end position="334"/>
    </location>
</feature>
<feature type="helix" evidence="15">
    <location>
        <begin position="336"/>
        <end position="339"/>
    </location>
</feature>
<feature type="helix" evidence="15">
    <location>
        <begin position="345"/>
        <end position="358"/>
    </location>
</feature>
<feature type="strand" evidence="15">
    <location>
        <begin position="362"/>
        <end position="365"/>
    </location>
</feature>
<feature type="strand" evidence="15">
    <location>
        <begin position="367"/>
        <end position="370"/>
    </location>
</feature>
<feature type="strand" evidence="13">
    <location>
        <begin position="374"/>
        <end position="378"/>
    </location>
</feature>
<feature type="turn" evidence="15">
    <location>
        <begin position="387"/>
        <end position="389"/>
    </location>
</feature>
<feature type="helix" evidence="15">
    <location>
        <begin position="393"/>
        <end position="402"/>
    </location>
</feature>
<feature type="turn" evidence="15">
    <location>
        <begin position="403"/>
        <end position="405"/>
    </location>
</feature>
<feature type="strand" evidence="15">
    <location>
        <begin position="407"/>
        <end position="412"/>
    </location>
</feature>
<feature type="strand" evidence="15">
    <location>
        <begin position="419"/>
        <end position="421"/>
    </location>
</feature>
<feature type="helix" evidence="15">
    <location>
        <begin position="422"/>
        <end position="426"/>
    </location>
</feature>
<feature type="helix" evidence="15">
    <location>
        <begin position="428"/>
        <end position="430"/>
    </location>
</feature>
<feature type="strand" evidence="15">
    <location>
        <begin position="441"/>
        <end position="444"/>
    </location>
</feature>
<feature type="strand" evidence="15">
    <location>
        <begin position="446"/>
        <end position="448"/>
    </location>
</feature>
<feature type="helix" evidence="15">
    <location>
        <begin position="453"/>
        <end position="468"/>
    </location>
</feature>
<feature type="turn" evidence="15">
    <location>
        <begin position="469"/>
        <end position="471"/>
    </location>
</feature>
<feature type="strand" evidence="15">
    <location>
        <begin position="474"/>
        <end position="477"/>
    </location>
</feature>
<feature type="helix" evidence="15">
    <location>
        <begin position="493"/>
        <end position="498"/>
    </location>
</feature>
<feature type="helix" evidence="15">
    <location>
        <begin position="499"/>
        <end position="517"/>
    </location>
</feature>
<feature type="strand" evidence="15">
    <location>
        <begin position="522"/>
        <end position="525"/>
    </location>
</feature>
<feature type="helix" evidence="15">
    <location>
        <begin position="535"/>
        <end position="540"/>
    </location>
</feature>
<feature type="strand" evidence="15">
    <location>
        <begin position="541"/>
        <end position="545"/>
    </location>
</feature>
<feature type="helix" evidence="15">
    <location>
        <begin position="554"/>
        <end position="562"/>
    </location>
</feature>
<feature type="turn" evidence="15">
    <location>
        <begin position="563"/>
        <end position="565"/>
    </location>
</feature>
<feature type="helix" evidence="15">
    <location>
        <begin position="568"/>
        <end position="570"/>
    </location>
</feature>
<feature type="strand" evidence="15">
    <location>
        <begin position="571"/>
        <end position="575"/>
    </location>
</feature>
<feature type="turn" evidence="15">
    <location>
        <begin position="581"/>
        <end position="583"/>
    </location>
</feature>
<feature type="helix" evidence="15">
    <location>
        <begin position="589"/>
        <end position="596"/>
    </location>
</feature>
<feature type="strand" evidence="15">
    <location>
        <begin position="599"/>
        <end position="603"/>
    </location>
</feature>
<feature type="helix" evidence="15">
    <location>
        <begin position="607"/>
        <end position="609"/>
    </location>
</feature>
<feature type="helix" evidence="15">
    <location>
        <begin position="612"/>
        <end position="634"/>
    </location>
</feature>
<feature type="strand" evidence="15">
    <location>
        <begin position="635"/>
        <end position="641"/>
    </location>
</feature>
<feature type="turn" evidence="15">
    <location>
        <begin position="643"/>
        <end position="645"/>
    </location>
</feature>
<feature type="strand" evidence="15">
    <location>
        <begin position="646"/>
        <end position="654"/>
    </location>
</feature>
<feature type="strand" evidence="15">
    <location>
        <begin position="658"/>
        <end position="667"/>
    </location>
</feature>
<feature type="strand" evidence="16">
    <location>
        <begin position="677"/>
        <end position="679"/>
    </location>
</feature>
<feature type="strand" evidence="15">
    <location>
        <begin position="688"/>
        <end position="692"/>
    </location>
</feature>
<feature type="turn" evidence="15">
    <location>
        <begin position="693"/>
        <end position="695"/>
    </location>
</feature>
<feature type="strand" evidence="15">
    <location>
        <begin position="696"/>
        <end position="699"/>
    </location>
</feature>
<feature type="helix" evidence="15">
    <location>
        <begin position="700"/>
        <end position="705"/>
    </location>
</feature>
<feature type="strand" evidence="16">
    <location>
        <begin position="708"/>
        <end position="710"/>
    </location>
</feature>
<feature type="strand" evidence="15">
    <location>
        <begin position="715"/>
        <end position="726"/>
    </location>
</feature>
<dbReference type="EC" id="3.2.1.22" evidence="2 3 4"/>
<dbReference type="EMBL" id="AY013286">
    <property type="protein sequence ID" value="AAG49420.1"/>
    <property type="molecule type" value="Genomic_DNA"/>
</dbReference>
<dbReference type="PDB" id="4FNP">
    <property type="method" value="X-ray"/>
    <property type="resolution" value="2.80 A"/>
    <property type="chains" value="A/B/C/D=1-729"/>
</dbReference>
<dbReference type="PDB" id="4FNR">
    <property type="method" value="X-ray"/>
    <property type="resolution" value="3.20 A"/>
    <property type="chains" value="A/B/C/D=1-729"/>
</dbReference>
<dbReference type="PDB" id="4FNS">
    <property type="method" value="X-ray"/>
    <property type="resolution" value="2.60 A"/>
    <property type="chains" value="A/B/C/D=1-729"/>
</dbReference>
<dbReference type="PDB" id="4FNT">
    <property type="method" value="X-ray"/>
    <property type="resolution" value="2.60 A"/>
    <property type="chains" value="A/B/C/D=1-729"/>
</dbReference>
<dbReference type="PDB" id="4FNU">
    <property type="method" value="X-ray"/>
    <property type="resolution" value="3.60 A"/>
    <property type="chains" value="A/B/C/D=1-729"/>
</dbReference>
<dbReference type="PDBsum" id="4FNP"/>
<dbReference type="PDBsum" id="4FNR"/>
<dbReference type="PDBsum" id="4FNS"/>
<dbReference type="PDBsum" id="4FNT"/>
<dbReference type="PDBsum" id="4FNU"/>
<dbReference type="SMR" id="Q9ALJ4"/>
<dbReference type="CAZy" id="GH36">
    <property type="family name" value="Glycoside Hydrolase Family 36"/>
</dbReference>
<dbReference type="BRENDA" id="3.2.1.22">
    <property type="organism ID" value="623"/>
</dbReference>
<dbReference type="EvolutionaryTrace" id="Q9ALJ4"/>
<dbReference type="GO" id="GO:0004557">
    <property type="term" value="F:alpha-galactosidase activity"/>
    <property type="evidence" value="ECO:0000314"/>
    <property type="project" value="UniProtKB"/>
</dbReference>
<dbReference type="GO" id="GO:0051289">
    <property type="term" value="P:protein homotetramerization"/>
    <property type="evidence" value="ECO:0000250"/>
    <property type="project" value="UniProtKB"/>
</dbReference>
<dbReference type="GO" id="GO:0034484">
    <property type="term" value="P:raffinose catabolic process"/>
    <property type="evidence" value="ECO:0000314"/>
    <property type="project" value="UniProtKB"/>
</dbReference>
<dbReference type="GO" id="GO:0033531">
    <property type="term" value="P:stachyose metabolic process"/>
    <property type="evidence" value="ECO:0000314"/>
    <property type="project" value="UniProtKB"/>
</dbReference>
<dbReference type="CDD" id="cd14791">
    <property type="entry name" value="GH36"/>
    <property type="match status" value="1"/>
</dbReference>
<dbReference type="FunFam" id="3.20.20.70:FF:000118">
    <property type="entry name" value="Alpha-galactosidase"/>
    <property type="match status" value="1"/>
</dbReference>
<dbReference type="FunFam" id="2.70.98.60:FF:000006">
    <property type="entry name" value="Alpha-galactosidase AgaA"/>
    <property type="match status" value="1"/>
</dbReference>
<dbReference type="Gene3D" id="3.20.20.70">
    <property type="entry name" value="Aldolase class I"/>
    <property type="match status" value="1"/>
</dbReference>
<dbReference type="Gene3D" id="2.70.98.60">
    <property type="entry name" value="alpha-galactosidase from lactobacil brevis"/>
    <property type="match status" value="1"/>
</dbReference>
<dbReference type="Gene3D" id="2.60.40.1180">
    <property type="entry name" value="Golgi alpha-mannosidase II"/>
    <property type="match status" value="1"/>
</dbReference>
<dbReference type="InterPro" id="IPR013785">
    <property type="entry name" value="Aldolase_TIM"/>
</dbReference>
<dbReference type="InterPro" id="IPR038417">
    <property type="entry name" value="Alpga-gal_N_sf"/>
</dbReference>
<dbReference type="InterPro" id="IPR050985">
    <property type="entry name" value="Alpha-glycosidase_related"/>
</dbReference>
<dbReference type="InterPro" id="IPR000111">
    <property type="entry name" value="Glyco_hydro_27/36_CS"/>
</dbReference>
<dbReference type="InterPro" id="IPR002252">
    <property type="entry name" value="Glyco_hydro_36"/>
</dbReference>
<dbReference type="InterPro" id="IPR031705">
    <property type="entry name" value="Glyco_hydro_36_C"/>
</dbReference>
<dbReference type="InterPro" id="IPR031704">
    <property type="entry name" value="Glyco_hydro_36_N"/>
</dbReference>
<dbReference type="InterPro" id="IPR013780">
    <property type="entry name" value="Glyco_hydro_b"/>
</dbReference>
<dbReference type="InterPro" id="IPR017853">
    <property type="entry name" value="Glycoside_hydrolase_SF"/>
</dbReference>
<dbReference type="PANTHER" id="PTHR43053:SF3">
    <property type="entry name" value="ALPHA-GALACTOSIDASE C-RELATED"/>
    <property type="match status" value="1"/>
</dbReference>
<dbReference type="PANTHER" id="PTHR43053">
    <property type="entry name" value="GLYCOSIDASE FAMILY 31"/>
    <property type="match status" value="1"/>
</dbReference>
<dbReference type="Pfam" id="PF16874">
    <property type="entry name" value="Glyco_hydro_36C"/>
    <property type="match status" value="1"/>
</dbReference>
<dbReference type="Pfam" id="PF16875">
    <property type="entry name" value="Glyco_hydro_36N"/>
    <property type="match status" value="1"/>
</dbReference>
<dbReference type="Pfam" id="PF02065">
    <property type="entry name" value="Melibiase"/>
    <property type="match status" value="1"/>
</dbReference>
<dbReference type="PIRSF" id="PIRSF005536">
    <property type="entry name" value="Agal"/>
    <property type="match status" value="1"/>
</dbReference>
<dbReference type="PRINTS" id="PR00743">
    <property type="entry name" value="GLHYDRLASE36"/>
</dbReference>
<dbReference type="SUPFAM" id="SSF51445">
    <property type="entry name" value="(Trans)glycosidases"/>
    <property type="match status" value="1"/>
</dbReference>
<dbReference type="PROSITE" id="PS00512">
    <property type="entry name" value="ALPHA_GALACTOSIDASE"/>
    <property type="match status" value="1"/>
</dbReference>
<name>AGAA_GEOSE</name>
<protein>
    <recommendedName>
        <fullName evidence="6 8">Alpha-galactosidase AgaA</fullName>
        <ecNumber evidence="2 3 4">3.2.1.22</ecNumber>
    </recommendedName>
</protein>
<gene>
    <name evidence="6 8" type="primary">agaA</name>
</gene>
<sequence>MSVAYNPQTKQFHLRAGKASYVMQLFRSGYLAHVYWGKAVRDVRGARAFPRLDRAFSPNPDPSDRTFSLDTLLQEYPAYGNTDFRAPAYQVQLENGSTVTDLRYKTHRIYKGKPRLNGLPATYVEHEQEAETLEIVLGDALIGLEVTLQYTAYEKWNVITRSARFENKGGERLKLLRALSMSVDFPTADYDWIHLPGAWGRERWIERRPLVTGVQAAESRRGASSHQQNPFIALVAKNADEHQGEVYGFSFVYSGNFLAQIEVDQFGTARVSMGINPFDFTWLLQPGESFQTPEVVMVYSDQGLNGMSQTYHELYRTRLARGAFRDRERPILINNWEATYFDFNEEKIVNIARTAAELGIELVVLDDGWFGERDDDRRSLGDWIVNRRKLPNGLDGLAKQVNELGLQFGLWVEPEMVSPNSELYRKHPDWCLHVPNRPRSEGRNQLVLDYSREDVCDYIIETISNVLASAPITYVKWDMNRHMTEIGSSALPPERQRETAHRYMLGLYRVMDEITSRFPHILFESCSGGGGRFDPGMLYYMPQTWTSDNTDAVSRLKIQYGTSLVYPISAMGAHVSAVPNHQVGRVASLKTRGHVAMSGNFGYELDITKLTETEKQMMKQQVAFYKDVRRLVQFGTFYRLLSPFEGNEAAWMFVSADRSEALVAYFRVLAEANAPLSYLRLKGLDSNQDYEIEGLGVYGGDELMYAGVALPYRSSDFISMMWRLKAVQQ</sequence>
<keyword id="KW-0002">3D-structure</keyword>
<keyword id="KW-0119">Carbohydrate metabolism</keyword>
<keyword id="KW-0326">Glycosidase</keyword>
<keyword id="KW-0378">Hydrolase</keyword>
<organism evidence="8">
    <name type="scientific">Geobacillus stearothermophilus</name>
    <name type="common">Bacillus stearothermophilus</name>
    <dbReference type="NCBI Taxonomy" id="1422"/>
    <lineage>
        <taxon>Bacteria</taxon>
        <taxon>Bacillati</taxon>
        <taxon>Bacillota</taxon>
        <taxon>Bacilli</taxon>
        <taxon>Bacillales</taxon>
        <taxon>Anoxybacillaceae</taxon>
        <taxon>Geobacillus</taxon>
    </lineage>
</organism>
<evidence type="ECO:0000250" key="1">
    <source>
        <dbReference type="UniProtKB" id="G1UB44"/>
    </source>
</evidence>
<evidence type="ECO:0000269" key="2">
    <source>
    </source>
</evidence>
<evidence type="ECO:0000269" key="3">
    <source>
    </source>
</evidence>
<evidence type="ECO:0000269" key="4">
    <source ref="1"/>
</evidence>
<evidence type="ECO:0000303" key="5">
    <source>
    </source>
</evidence>
<evidence type="ECO:0000303" key="6">
    <source ref="1"/>
</evidence>
<evidence type="ECO:0000305" key="7"/>
<evidence type="ECO:0000312" key="8">
    <source>
        <dbReference type="EMBL" id="AAG49420.1"/>
    </source>
</evidence>
<evidence type="ECO:0007744" key="9">
    <source>
        <dbReference type="PDB" id="4FNP"/>
    </source>
</evidence>
<evidence type="ECO:0007744" key="10">
    <source>
        <dbReference type="PDB" id="4FNR"/>
    </source>
</evidence>
<evidence type="ECO:0007744" key="11">
    <source>
        <dbReference type="PDB" id="4FNS"/>
    </source>
</evidence>
<evidence type="ECO:0007744" key="12">
    <source>
        <dbReference type="PDB" id="4FNT"/>
    </source>
</evidence>
<evidence type="ECO:0007829" key="13">
    <source>
        <dbReference type="PDB" id="4FNP"/>
    </source>
</evidence>
<evidence type="ECO:0007829" key="14">
    <source>
        <dbReference type="PDB" id="4FNR"/>
    </source>
</evidence>
<evidence type="ECO:0007829" key="15">
    <source>
        <dbReference type="PDB" id="4FNS"/>
    </source>
</evidence>
<evidence type="ECO:0007829" key="16">
    <source>
        <dbReference type="PDB" id="4FNT"/>
    </source>
</evidence>
<reference evidence="8" key="1">
    <citation type="journal article" date="1988" name="J. Biotechnol.">
        <title>Production of thermostable, recombinant alpha-galactosidase suitable for raffinose elimination from sugar beet syrup.</title>
        <authorList>
            <person name="Ganter C."/>
            <person name="Boeck A."/>
            <person name="Buckel P."/>
            <person name="Mattes R."/>
        </authorList>
    </citation>
    <scope>NUCLEOTIDE SEQUENCE [GENOMIC DNA]</scope>
    <scope>CATALYTIC ACTIVITY</scope>
    <scope>ACTIVITY REGULATION</scope>
    <scope>BIOPHYSICOCHEMICAL PROPERTIES</scope>
    <scope>BIOTECHNOLOGY</scope>
    <source>
        <strain evidence="6 8">KVE39</strain>
    </source>
</reference>
<reference key="2">
    <citation type="journal article" date="2006" name="Acta Crystallogr. F">
        <title>Crystallization and preliminary X-ray diffraction studies of two thermostable alpha-galactosidases from glycoside hydrolase family 36.</title>
        <authorList>
            <person name="Foucault M."/>
            <person name="Watzlawick H."/>
            <person name="Mattes R."/>
            <person name="Haser R."/>
            <person name="Gouet P."/>
        </authorList>
    </citation>
    <scope>CRYSTALLIZATION OF MUTANT GLU-355</scope>
    <scope>CATALYTIC ACTIVITY</scope>
    <source>
        <strain evidence="5">KVE39</strain>
    </source>
</reference>
<reference evidence="9 10 11" key="3">
    <citation type="journal article" date="2012" name="J. Biol. Chem.">
        <title>The molecular mechanism of thermostable alpha-galactosidases AgaA and AgaB explained by x-ray crystallography and mutational studies.</title>
        <authorList>
            <person name="Merceron R."/>
            <person name="Foucault M."/>
            <person name="Haser R."/>
            <person name="Mattes R."/>
            <person name="Watzlawick H."/>
            <person name="Gouet P."/>
        </authorList>
    </citation>
    <scope>X-RAY CRYSTALLOGRAPHY (2.60 ANGSTROMS) OF SUBSTRATE-FREE WILD-TYPE AND MUTANT GLU-355 AND IN COMPLEX WITH RAFFINOSE; STACHYOSE AND INHIBITOR</scope>
    <scope>FUNCTION</scope>
    <scope>CATALYTIC ACTIVITY</scope>
    <scope>ACTIVITY REGULATION</scope>
    <scope>BIOPHYSICOCHEMICAL PROPERTIES</scope>
    <scope>ACTIVE SITE</scope>
    <scope>MUTAGENESIS OF TRP-336; ASP-478 AND ASP-548</scope>
</reference>